<name>PLDA1_TOBAC</name>
<accession>P93400</accession>
<accession>P93399</accession>
<reference key="1">
    <citation type="submission" date="1997-02" db="EMBL/GenBank/DDBJ databases">
        <authorList>
            <person name="Lein W."/>
            <person name="Saalbach G."/>
        </authorList>
    </citation>
    <scope>NUCLEOTIDE SEQUENCE [MRNA]</scope>
    <source>
        <strain>cv. SR1</strain>
        <tissue>Leaf</tissue>
    </source>
</reference>
<keyword id="KW-0106">Calcium</keyword>
<keyword id="KW-0378">Hydrolase</keyword>
<keyword id="KW-0442">Lipid degradation</keyword>
<keyword id="KW-0443">Lipid metabolism</keyword>
<keyword id="KW-0479">Metal-binding</keyword>
<keyword id="KW-1185">Reference proteome</keyword>
<keyword id="KW-0677">Repeat</keyword>
<gene>
    <name type="primary">PLD1</name>
</gene>
<organism>
    <name type="scientific">Nicotiana tabacum</name>
    <name type="common">Common tobacco</name>
    <dbReference type="NCBI Taxonomy" id="4097"/>
    <lineage>
        <taxon>Eukaryota</taxon>
        <taxon>Viridiplantae</taxon>
        <taxon>Streptophyta</taxon>
        <taxon>Embryophyta</taxon>
        <taxon>Tracheophyta</taxon>
        <taxon>Spermatophyta</taxon>
        <taxon>Magnoliopsida</taxon>
        <taxon>eudicotyledons</taxon>
        <taxon>Gunneridae</taxon>
        <taxon>Pentapetalae</taxon>
        <taxon>asterids</taxon>
        <taxon>lamiids</taxon>
        <taxon>Solanales</taxon>
        <taxon>Solanaceae</taxon>
        <taxon>Nicotianoideae</taxon>
        <taxon>Nicotianeae</taxon>
        <taxon>Nicotiana</taxon>
    </lineage>
</organism>
<feature type="chain" id="PRO_0000218823" description="Phospholipase D alpha 1">
    <location>
        <begin position="1"/>
        <end position="808"/>
    </location>
</feature>
<feature type="domain" description="C2" evidence="3">
    <location>
        <begin position="1"/>
        <end position="125"/>
    </location>
</feature>
<feature type="domain" description="PLD phosphodiesterase 1" evidence="4">
    <location>
        <begin position="326"/>
        <end position="364"/>
    </location>
</feature>
<feature type="domain" description="PLD phosphodiesterase 2" evidence="4">
    <location>
        <begin position="654"/>
        <end position="681"/>
    </location>
</feature>
<feature type="active site" evidence="4">
    <location>
        <position position="331"/>
    </location>
</feature>
<feature type="active site" evidence="4">
    <location>
        <position position="333"/>
    </location>
</feature>
<feature type="active site" evidence="4">
    <location>
        <position position="338"/>
    </location>
</feature>
<feature type="active site" evidence="4">
    <location>
        <position position="659"/>
    </location>
</feature>
<feature type="active site" evidence="4">
    <location>
        <position position="661"/>
    </location>
</feature>
<feature type="active site" evidence="4">
    <location>
        <position position="666"/>
    </location>
</feature>
<feature type="binding site" evidence="2">
    <location>
        <position position="186"/>
    </location>
    <ligand>
        <name>Ca(2+)</name>
        <dbReference type="ChEBI" id="CHEBI:29108"/>
    </ligand>
</feature>
<feature type="binding site" evidence="2">
    <location>
        <position position="331"/>
    </location>
    <ligand>
        <name>a 1,2-diacyl-sn-glycero-3-phosphate</name>
        <dbReference type="ChEBI" id="CHEBI:58608"/>
    </ligand>
</feature>
<feature type="binding site" evidence="2">
    <location>
        <position position="370"/>
    </location>
    <ligand>
        <name>Ca(2+)</name>
        <dbReference type="ChEBI" id="CHEBI:29108"/>
    </ligand>
</feature>
<feature type="binding site" evidence="2">
    <location>
        <position position="404"/>
    </location>
    <ligand>
        <name>Ca(2+)</name>
        <dbReference type="ChEBI" id="CHEBI:29108"/>
    </ligand>
</feature>
<feature type="binding site" evidence="2">
    <location>
        <position position="520"/>
    </location>
    <ligand>
        <name>a 1,2-diacyl-sn-glycero-3-phosphate</name>
        <dbReference type="ChEBI" id="CHEBI:58608"/>
    </ligand>
</feature>
<feature type="binding site" evidence="2">
    <location>
        <position position="659"/>
    </location>
    <ligand>
        <name>a 1,2-diacyl-sn-glycero-3-phosphate</name>
        <dbReference type="ChEBI" id="CHEBI:58608"/>
    </ligand>
</feature>
<feature type="binding site" evidence="2">
    <location>
        <position position="720"/>
    </location>
    <ligand>
        <name>Ca(2+)</name>
        <dbReference type="ChEBI" id="CHEBI:29108"/>
    </ligand>
</feature>
<dbReference type="EC" id="3.1.4.4"/>
<dbReference type="EMBL" id="Z84822">
    <property type="protein sequence ID" value="CAB06620.1"/>
    <property type="molecule type" value="mRNA"/>
</dbReference>
<dbReference type="PIR" id="T04092">
    <property type="entry name" value="T04092"/>
</dbReference>
<dbReference type="RefSeq" id="NP_001312217.1">
    <property type="nucleotide sequence ID" value="NM_001325288.1"/>
</dbReference>
<dbReference type="STRING" id="4097.P93400"/>
<dbReference type="PaxDb" id="4097-P93400"/>
<dbReference type="ProMEX" id="P93400"/>
<dbReference type="GeneID" id="107779725"/>
<dbReference type="KEGG" id="nta:107779725"/>
<dbReference type="OrthoDB" id="14911at2759"/>
<dbReference type="BRENDA" id="3.1.4.4">
    <property type="organism ID" value="3645"/>
</dbReference>
<dbReference type="Proteomes" id="UP000084051">
    <property type="component" value="Unplaced"/>
</dbReference>
<dbReference type="GO" id="GO:0005886">
    <property type="term" value="C:plasma membrane"/>
    <property type="evidence" value="ECO:0000318"/>
    <property type="project" value="GO_Central"/>
</dbReference>
<dbReference type="GO" id="GO:0005509">
    <property type="term" value="F:calcium ion binding"/>
    <property type="evidence" value="ECO:0007669"/>
    <property type="project" value="InterPro"/>
</dbReference>
<dbReference type="GO" id="GO:0004630">
    <property type="term" value="F:phospholipase D activity"/>
    <property type="evidence" value="ECO:0000318"/>
    <property type="project" value="GO_Central"/>
</dbReference>
<dbReference type="GO" id="GO:0046470">
    <property type="term" value="P:phosphatidylcholine metabolic process"/>
    <property type="evidence" value="ECO:0007669"/>
    <property type="project" value="InterPro"/>
</dbReference>
<dbReference type="GO" id="GO:0009395">
    <property type="term" value="P:phospholipid catabolic process"/>
    <property type="evidence" value="ECO:0000318"/>
    <property type="project" value="GO_Central"/>
</dbReference>
<dbReference type="CDD" id="cd04015">
    <property type="entry name" value="C2_plant_PLD"/>
    <property type="match status" value="1"/>
</dbReference>
<dbReference type="FunFam" id="3.30.870.10:FF:000027">
    <property type="entry name" value="Phospholipase D"/>
    <property type="match status" value="1"/>
</dbReference>
<dbReference type="FunFam" id="3.30.870.10:FF:000025">
    <property type="entry name" value="Phospholipase D delta"/>
    <property type="match status" value="1"/>
</dbReference>
<dbReference type="Gene3D" id="2.60.40.150">
    <property type="entry name" value="C2 domain"/>
    <property type="match status" value="1"/>
</dbReference>
<dbReference type="Gene3D" id="3.30.870.10">
    <property type="entry name" value="Endonuclease Chain A"/>
    <property type="match status" value="2"/>
</dbReference>
<dbReference type="InterPro" id="IPR000008">
    <property type="entry name" value="C2_dom"/>
</dbReference>
<dbReference type="InterPro" id="IPR035892">
    <property type="entry name" value="C2_domain_sf"/>
</dbReference>
<dbReference type="InterPro" id="IPR001736">
    <property type="entry name" value="PLipase_D/transphosphatidylase"/>
</dbReference>
<dbReference type="InterPro" id="IPR024632">
    <property type="entry name" value="PLipase_D_C"/>
</dbReference>
<dbReference type="InterPro" id="IPR015679">
    <property type="entry name" value="PLipase_D_fam"/>
</dbReference>
<dbReference type="InterPro" id="IPR011402">
    <property type="entry name" value="PLipase_D_pln"/>
</dbReference>
<dbReference type="PANTHER" id="PTHR18896">
    <property type="entry name" value="PHOSPHOLIPASE D"/>
    <property type="match status" value="1"/>
</dbReference>
<dbReference type="PANTHER" id="PTHR18896:SF115">
    <property type="entry name" value="PHOSPHOLIPASE D ALPHA 1"/>
    <property type="match status" value="1"/>
</dbReference>
<dbReference type="Pfam" id="PF00168">
    <property type="entry name" value="C2"/>
    <property type="match status" value="1"/>
</dbReference>
<dbReference type="Pfam" id="PF12357">
    <property type="entry name" value="PLD_C"/>
    <property type="match status" value="1"/>
</dbReference>
<dbReference type="Pfam" id="PF00614">
    <property type="entry name" value="PLDc"/>
    <property type="match status" value="2"/>
</dbReference>
<dbReference type="PIRSF" id="PIRSF036470">
    <property type="entry name" value="PLD_plant"/>
    <property type="match status" value="1"/>
</dbReference>
<dbReference type="SMART" id="SM00239">
    <property type="entry name" value="C2"/>
    <property type="match status" value="1"/>
</dbReference>
<dbReference type="SMART" id="SM00155">
    <property type="entry name" value="PLDc"/>
    <property type="match status" value="2"/>
</dbReference>
<dbReference type="SUPFAM" id="SSF49562">
    <property type="entry name" value="C2 domain (Calcium/lipid-binding domain, CaLB)"/>
    <property type="match status" value="1"/>
</dbReference>
<dbReference type="SUPFAM" id="SSF56024">
    <property type="entry name" value="Phospholipase D/nuclease"/>
    <property type="match status" value="2"/>
</dbReference>
<dbReference type="PROSITE" id="PS50004">
    <property type="entry name" value="C2"/>
    <property type="match status" value="1"/>
</dbReference>
<dbReference type="PROSITE" id="PS50035">
    <property type="entry name" value="PLD"/>
    <property type="match status" value="2"/>
</dbReference>
<sequence length="808" mass="91967">MAQILLHGTLHVTIYEVDNLQKEGGGHFFSKIKEHVEETIGFGKGTPAIYATVDLEKARVGRTRKIKNEPNNPRWYESFHIYCAHMASNVIFTVKDDNPIGATLIGRAYVPVEELLEGEEIDKWVEILDREMNPIAEGSKIHVKLQFFDVSRDPNWERGIRSSKYPGVPYTFFAQRTGCRVSLYQDAHVPDNFIPKIPLSGGKYYEPHRCWEDIFDAIINAKHLIYITGWSVYTEITLVRDSRRQKPGGDITLGELLKKKASEGVKVLMLVWDDRTSVGLLKKDGLMATHDQETEQFFQGTEVNCVLCPRNPDDGGSIVQSLQIGTMFTHHQKIVVVDSELPSGESEKRRILSFVGGIDLCDGRYDTPFHSLFRTLDTAHHDDFHQPNFPDGAITKGGPREPWHDIHSRLEGPIAWDVLFNFEQRWRKQGGKDVLVNFRELDDIIIPPSPVMHLDDSETWNVQLFRSIDEGAAFGFPETPEDAAKAGLVSGXDNIIDRSIQDAYIHAIRRAKNFIYIENQYFLGSSYDWQSDDIKVEDIGALHVIPKELALKIVSKIEAGERFTVYVVVPMWPEGIPESASVQAILDWQRRTMEMMYKHIVQALNAKGIEEDPRNYLTFFCIGNREVKKSGAYEPSETPEPDSDYIRAQEARRFMIYVHSKMMIVDDEYIIVGSANINQRSMDGARDSEIAMGAYQPHHLATREPARGQIHGFRMALWYEHLGMLDETFLHPESEECVSKVNRMADKYWDLYSSESLERDLPGHLLRYPIGVASEGDVTELPGAEHFPDTKARVLGTKSDYLPPILTT</sequence>
<comment type="function">
    <text>Hydrolyzes glycerol-phospholipids at the terminal phosphodiesteric bond. Plays an important role in various cellular processes.</text>
</comment>
<comment type="catalytic activity">
    <reaction>
        <text>a 1,2-diacyl-sn-glycero-3-phosphocholine + H2O = a 1,2-diacyl-sn-glycero-3-phosphate + choline + H(+)</text>
        <dbReference type="Rhea" id="RHEA:14445"/>
        <dbReference type="ChEBI" id="CHEBI:15354"/>
        <dbReference type="ChEBI" id="CHEBI:15377"/>
        <dbReference type="ChEBI" id="CHEBI:15378"/>
        <dbReference type="ChEBI" id="CHEBI:57643"/>
        <dbReference type="ChEBI" id="CHEBI:58608"/>
        <dbReference type="EC" id="3.1.4.4"/>
    </reaction>
</comment>
<comment type="cofactor">
    <cofactor evidence="1">
        <name>Ca(2+)</name>
        <dbReference type="ChEBI" id="CHEBI:29108"/>
    </cofactor>
</comment>
<comment type="domain">
    <text>C2 domain is a calcium-binding fold, and the binding promotes the protein association with membranes. A lower affinity toward calcium can be anticipated for PLD alpha due to the absence of two potential calcium ligands.</text>
</comment>
<comment type="similarity">
    <text evidence="5">Belongs to the phospholipase D family. C2-PLD subfamily.</text>
</comment>
<protein>
    <recommendedName>
        <fullName>Phospholipase D alpha 1</fullName>
        <shortName>PLD alpha 1</shortName>
        <ecNumber>3.1.4.4</ecNumber>
    </recommendedName>
    <alternativeName>
        <fullName>Choline phosphatase 1</fullName>
    </alternativeName>
    <alternativeName>
        <fullName>Phosphatidylcholine-hydrolyzing phospholipase D 1</fullName>
    </alternativeName>
</protein>
<evidence type="ECO:0000250" key="1"/>
<evidence type="ECO:0000250" key="2">
    <source>
        <dbReference type="UniProtKB" id="Q38882"/>
    </source>
</evidence>
<evidence type="ECO:0000255" key="3">
    <source>
        <dbReference type="PROSITE-ProRule" id="PRU00041"/>
    </source>
</evidence>
<evidence type="ECO:0000255" key="4">
    <source>
        <dbReference type="PROSITE-ProRule" id="PRU00153"/>
    </source>
</evidence>
<evidence type="ECO:0000305" key="5"/>
<proteinExistence type="evidence at transcript level"/>